<feature type="signal peptide" evidence="1">
    <location>
        <begin position="1"/>
        <end position="25"/>
    </location>
</feature>
<feature type="chain" id="PRO_0000202550" description="Sporulation-specific protein 22">
    <location>
        <begin position="26"/>
        <end position="440"/>
    </location>
</feature>
<feature type="propeptide" id="PRO_0000277472" description="Removed in mature form" evidence="1">
    <location>
        <begin position="441"/>
        <end position="463"/>
    </location>
</feature>
<feature type="repeat" description="LRR 1">
    <location>
        <begin position="127"/>
        <end position="147"/>
    </location>
</feature>
<feature type="repeat" description="LRR 2">
    <location>
        <begin position="185"/>
        <end position="206"/>
    </location>
</feature>
<feature type="repeat" description="LRR 3">
    <location>
        <begin position="207"/>
        <end position="233"/>
    </location>
</feature>
<feature type="repeat" description="LRR 4">
    <location>
        <begin position="251"/>
        <end position="275"/>
    </location>
</feature>
<feature type="repeat" description="LRR 5">
    <location>
        <begin position="302"/>
        <end position="325"/>
    </location>
</feature>
<feature type="lipid moiety-binding region" description="GPI-anchor amidated asparagine" evidence="1">
    <location>
        <position position="440"/>
    </location>
</feature>
<feature type="glycosylation site" description="N-linked (GlcNAc...) asparagine" evidence="1">
    <location>
        <position position="256"/>
    </location>
</feature>
<feature type="glycosylation site" description="N-linked (GlcNAc...) asparagine" evidence="1">
    <location>
        <position position="314"/>
    </location>
</feature>
<feature type="glycosylation site" description="N-linked (GlcNAc...) asparagine" evidence="1">
    <location>
        <position position="327"/>
    </location>
</feature>
<evidence type="ECO:0000255" key="1"/>
<evidence type="ECO:0000269" key="2">
    <source>
    </source>
</evidence>
<evidence type="ECO:0000305" key="3"/>
<protein>
    <recommendedName>
        <fullName>Sporulation-specific protein 22</fullName>
    </recommendedName>
</protein>
<reference key="1">
    <citation type="journal article" date="1992" name="Nature">
        <title>The complete DNA sequence of yeast chromosome III.</title>
        <authorList>
            <person name="Oliver S.G."/>
            <person name="van der Aart Q.J.M."/>
            <person name="Agostoni-Carbone M.L."/>
            <person name="Aigle M."/>
            <person name="Alberghina L."/>
            <person name="Alexandraki D."/>
            <person name="Antoine G."/>
            <person name="Anwar R."/>
            <person name="Ballesta J.P.G."/>
            <person name="Benit P."/>
            <person name="Berben G."/>
            <person name="Bergantino E."/>
            <person name="Biteau N."/>
            <person name="Bolle P.-A."/>
            <person name="Bolotin-Fukuhara M."/>
            <person name="Brown A."/>
            <person name="Brown A.J.P."/>
            <person name="Buhler J.-M."/>
            <person name="Carcano C."/>
            <person name="Carignani G."/>
            <person name="Cederberg H."/>
            <person name="Chanet R."/>
            <person name="Contreras R."/>
            <person name="Crouzet M."/>
            <person name="Daignan-Fornier B."/>
            <person name="Defoor E."/>
            <person name="Delgado M.D."/>
            <person name="Demolder J."/>
            <person name="Doira C."/>
            <person name="Dubois E."/>
            <person name="Dujon B."/>
            <person name="Duesterhoeft A."/>
            <person name="Erdmann D."/>
            <person name="Esteban M."/>
            <person name="Fabre F."/>
            <person name="Fairhead C."/>
            <person name="Faye G."/>
            <person name="Feldmann H."/>
            <person name="Fiers W."/>
            <person name="Francingues-Gaillard M.-C."/>
            <person name="Franco L."/>
            <person name="Frontali L."/>
            <person name="Fukuhara H."/>
            <person name="Fuller L.J."/>
            <person name="Galland P."/>
            <person name="Gent M.E."/>
            <person name="Gigot D."/>
            <person name="Gilliquet V."/>
            <person name="Glansdorff N."/>
            <person name="Goffeau A."/>
            <person name="Grenson M."/>
            <person name="Grisanti P."/>
            <person name="Grivell L.A."/>
            <person name="de Haan M."/>
            <person name="Haasemann M."/>
            <person name="Hatat D."/>
            <person name="Hoenicka J."/>
            <person name="Hegemann J.H."/>
            <person name="Herbert C.J."/>
            <person name="Hilger F."/>
            <person name="Hohmann S."/>
            <person name="Hollenberg C.P."/>
            <person name="Huse K."/>
            <person name="Iborra F."/>
            <person name="Indge K.J."/>
            <person name="Isono K."/>
            <person name="Jacq C."/>
            <person name="Jacquet M."/>
            <person name="James C.M."/>
            <person name="Jauniaux J.-C."/>
            <person name="Jia Y."/>
            <person name="Jimenez A."/>
            <person name="Kelly A."/>
            <person name="Kleinhans U."/>
            <person name="Kreisl P."/>
            <person name="Lanfranchi G."/>
            <person name="Lewis C."/>
            <person name="van der Linden C.G."/>
            <person name="Lucchini G."/>
            <person name="Lutzenkirchen K."/>
            <person name="Maat M.J."/>
            <person name="Mallet L."/>
            <person name="Mannhaupt G."/>
            <person name="Martegani E."/>
            <person name="Mathieu A."/>
            <person name="Maurer C.T.C."/>
            <person name="McConnell D."/>
            <person name="McKee R.A."/>
            <person name="Messenguy F."/>
            <person name="Mewes H.-W."/>
            <person name="Molemans F."/>
            <person name="Montague M.A."/>
            <person name="Muzi Falconi M."/>
            <person name="Navas L."/>
            <person name="Newlon C.S."/>
            <person name="Noone D."/>
            <person name="Pallier C."/>
            <person name="Panzeri L."/>
            <person name="Pearson B.M."/>
            <person name="Perea J."/>
            <person name="Philippsen P."/>
            <person name="Pierard A."/>
            <person name="Planta R.J."/>
            <person name="Plevani P."/>
            <person name="Poetsch B."/>
            <person name="Pohl F.M."/>
            <person name="Purnelle B."/>
            <person name="Ramezani Rad M."/>
            <person name="Rasmussen S.W."/>
            <person name="Raynal A."/>
            <person name="Remacha M.A."/>
            <person name="Richterich P."/>
            <person name="Roberts A.B."/>
            <person name="Rodriguez F."/>
            <person name="Sanz E."/>
            <person name="Schaaff-Gerstenschlaeger I."/>
            <person name="Scherens B."/>
            <person name="Schweitzer B."/>
            <person name="Shu Y."/>
            <person name="Skala J."/>
            <person name="Slonimski P.P."/>
            <person name="Sor F."/>
            <person name="Soustelle C."/>
            <person name="Spiegelberg R."/>
            <person name="Stateva L.I."/>
            <person name="Steensma H.Y."/>
            <person name="Steiner S."/>
            <person name="Thierry A."/>
            <person name="Thireos G."/>
            <person name="Tzermia M."/>
            <person name="Urrestarazu L.A."/>
            <person name="Valle G."/>
            <person name="Vetter I."/>
            <person name="van Vliet-Reedijk J.C."/>
            <person name="Voet M."/>
            <person name="Volckaert G."/>
            <person name="Vreken P."/>
            <person name="Wang H."/>
            <person name="Warmington J.R."/>
            <person name="von Wettstein D."/>
            <person name="Wicksteed B.L."/>
            <person name="Wilson C."/>
            <person name="Wurst H."/>
            <person name="Xu G."/>
            <person name="Yoshikawa A."/>
            <person name="Zimmermann F.K."/>
            <person name="Sgouros J.G."/>
        </authorList>
    </citation>
    <scope>NUCLEOTIDE SEQUENCE [LARGE SCALE GENOMIC DNA]</scope>
    <source>
        <strain>ATCC 204508 / S288c</strain>
    </source>
</reference>
<reference key="2">
    <citation type="journal article" date="2014" name="G3 (Bethesda)">
        <title>The reference genome sequence of Saccharomyces cerevisiae: Then and now.</title>
        <authorList>
            <person name="Engel S.R."/>
            <person name="Dietrich F.S."/>
            <person name="Fisk D.G."/>
            <person name="Binkley G."/>
            <person name="Balakrishnan R."/>
            <person name="Costanzo M.C."/>
            <person name="Dwight S.S."/>
            <person name="Hitz B.C."/>
            <person name="Karra K."/>
            <person name="Nash R.S."/>
            <person name="Weng S."/>
            <person name="Wong E.D."/>
            <person name="Lloyd P."/>
            <person name="Skrzypek M.S."/>
            <person name="Miyasato S.R."/>
            <person name="Simison M."/>
            <person name="Cherry J.M."/>
        </authorList>
    </citation>
    <scope>GENOME REANNOTATION</scope>
    <source>
        <strain>ATCC 204508 / S288c</strain>
    </source>
</reference>
<reference key="3">
    <citation type="journal article" date="2004" name="Eukaryot. Cell">
        <title>Morphogenetic pathway of spore wall assembly in Saccharomyces cerevisiae.</title>
        <authorList>
            <person name="Coluccio A."/>
            <person name="Bogengruber E."/>
            <person name="Conrad M.N."/>
            <person name="Dresser M.E."/>
            <person name="Briza P."/>
            <person name="Neiman A.M."/>
        </authorList>
    </citation>
    <scope>FUNCTION</scope>
</reference>
<name>SPS22_YEAST</name>
<keyword id="KW-1003">Cell membrane</keyword>
<keyword id="KW-0325">Glycoprotein</keyword>
<keyword id="KW-0336">GPI-anchor</keyword>
<keyword id="KW-0433">Leucine-rich repeat</keyword>
<keyword id="KW-0449">Lipoprotein</keyword>
<keyword id="KW-0472">Membrane</keyword>
<keyword id="KW-1185">Reference proteome</keyword>
<keyword id="KW-0677">Repeat</keyword>
<keyword id="KW-0732">Signal</keyword>
<keyword id="KW-0749">Sporulation</keyword>
<gene>
    <name type="primary">SPS22</name>
    <name type="ordered locus">YCL048W</name>
    <name type="ORF">YCL48W</name>
</gene>
<accession>P25380</accession>
<accession>D6VQW9</accession>
<sequence>MNRITRKSCLFAIIFASLFVTHALGAAIDPPRRPHNVKPFHNGNLELQRRANEPFFEIDVKSLNTNSPISELCKKDLHVIESSHDLFHLQNQCEFILGSLKVTNYDSNILDLNSLRAIGGDLIIQDSPELIRIQAGNLNKIEGLFQLQGLTSLVSVEIPTLKFCQSLEWKVVPILNYVSMDSQNIEIIKDIVISDTSLANIENFNKVQEIDTFNINNNRFLETIHSNVKTIRGQFSVHANAKELELEMPHLREVENITIRDTSLVYLPQLTKVKSSLEFIENYFYELNLNNLQKIGGTLGIINNVNLIKVNLENLTDIQGGLMIADNESLEDITFLPNLKQIGGAIFFEGSFKDIMFDSLKLVKGSAFIKSSSNVLDCNKWTNPSNGRSIIRGGKFTCISGKKENTLNVKQDGTIIEKGYKDLTQEGEDSKKRVISKYANSANPSMQLDPLLFGTCLVAMLLF</sequence>
<comment type="function">
    <text evidence="2">Redundant with SPS2 for the organization of the beta-glucan layer of the spore wall.</text>
</comment>
<comment type="subcellular location">
    <subcellularLocation>
        <location evidence="3">Cell membrane</location>
        <topology evidence="3">Lipid-anchor</topology>
        <topology evidence="3">GPI-anchor</topology>
    </subcellularLocation>
</comment>
<comment type="similarity">
    <text evidence="3">Belongs to the SPS2 family.</text>
</comment>
<organism>
    <name type="scientific">Saccharomyces cerevisiae (strain ATCC 204508 / S288c)</name>
    <name type="common">Baker's yeast</name>
    <dbReference type="NCBI Taxonomy" id="559292"/>
    <lineage>
        <taxon>Eukaryota</taxon>
        <taxon>Fungi</taxon>
        <taxon>Dikarya</taxon>
        <taxon>Ascomycota</taxon>
        <taxon>Saccharomycotina</taxon>
        <taxon>Saccharomycetes</taxon>
        <taxon>Saccharomycetales</taxon>
        <taxon>Saccharomycetaceae</taxon>
        <taxon>Saccharomyces</taxon>
    </lineage>
</organism>
<proteinExistence type="inferred from homology"/>
<dbReference type="EMBL" id="X59720">
    <property type="protein sequence ID" value="CAA42368.1"/>
    <property type="molecule type" value="Genomic_DNA"/>
</dbReference>
<dbReference type="EMBL" id="BK006937">
    <property type="protein sequence ID" value="DAA07438.1"/>
    <property type="molecule type" value="Genomic_DNA"/>
</dbReference>
<dbReference type="PIR" id="S19377">
    <property type="entry name" value="S19377"/>
</dbReference>
<dbReference type="RefSeq" id="NP_009882.1">
    <property type="nucleotide sequence ID" value="NM_001178693.1"/>
</dbReference>
<dbReference type="SMR" id="P25380"/>
<dbReference type="BioGRID" id="30937">
    <property type="interactions" value="42"/>
</dbReference>
<dbReference type="DIP" id="DIP-7724N"/>
<dbReference type="FunCoup" id="P25380">
    <property type="interactions" value="68"/>
</dbReference>
<dbReference type="IntAct" id="P25380">
    <property type="interactions" value="5"/>
</dbReference>
<dbReference type="STRING" id="4932.YCL048W"/>
<dbReference type="GlyCosmos" id="P25380">
    <property type="glycosylation" value="3 sites, No reported glycans"/>
</dbReference>
<dbReference type="GlyGen" id="P25380">
    <property type="glycosylation" value="3 sites"/>
</dbReference>
<dbReference type="iPTMnet" id="P25380"/>
<dbReference type="PaxDb" id="4932-YCL048W"/>
<dbReference type="PeptideAtlas" id="P25380"/>
<dbReference type="EnsemblFungi" id="YCL048W_mRNA">
    <property type="protein sequence ID" value="YCL048W"/>
    <property type="gene ID" value="YCL048W"/>
</dbReference>
<dbReference type="GeneID" id="850309"/>
<dbReference type="KEGG" id="sce:YCL048W"/>
<dbReference type="AGR" id="SGD:S000000553"/>
<dbReference type="SGD" id="S000000553">
    <property type="gene designation" value="SPS22"/>
</dbReference>
<dbReference type="VEuPathDB" id="FungiDB:YCL048W"/>
<dbReference type="eggNOG" id="ENOG502QT4Q">
    <property type="taxonomic scope" value="Eukaryota"/>
</dbReference>
<dbReference type="GeneTree" id="ENSGT00940000176339"/>
<dbReference type="HOGENOM" id="CLU_035846_2_1_1"/>
<dbReference type="InParanoid" id="P25380"/>
<dbReference type="OMA" id="NNNRYME"/>
<dbReference type="OrthoDB" id="536881at2759"/>
<dbReference type="BioCyc" id="YEAST:G3O-29303-MONOMER"/>
<dbReference type="BioGRID-ORCS" id="850309">
    <property type="hits" value="1 hit in 10 CRISPR screens"/>
</dbReference>
<dbReference type="PRO" id="PR:P25380"/>
<dbReference type="Proteomes" id="UP000002311">
    <property type="component" value="Chromosome III"/>
</dbReference>
<dbReference type="RNAct" id="P25380">
    <property type="molecule type" value="protein"/>
</dbReference>
<dbReference type="GO" id="GO:0005829">
    <property type="term" value="C:cytosol"/>
    <property type="evidence" value="ECO:0007005"/>
    <property type="project" value="SGD"/>
</dbReference>
<dbReference type="GO" id="GO:0005886">
    <property type="term" value="C:plasma membrane"/>
    <property type="evidence" value="ECO:0007669"/>
    <property type="project" value="UniProtKB-SubCell"/>
</dbReference>
<dbReference type="GO" id="GO:0098552">
    <property type="term" value="C:side of membrane"/>
    <property type="evidence" value="ECO:0007669"/>
    <property type="project" value="UniProtKB-KW"/>
</dbReference>
<dbReference type="GO" id="GO:0030476">
    <property type="term" value="P:ascospore wall assembly"/>
    <property type="evidence" value="ECO:0000315"/>
    <property type="project" value="SGD"/>
</dbReference>
<dbReference type="Gene3D" id="3.80.20.20">
    <property type="entry name" value="Receptor L-domain"/>
    <property type="match status" value="2"/>
</dbReference>
<dbReference type="InterPro" id="IPR051648">
    <property type="entry name" value="CWI-Assembly_Regulator"/>
</dbReference>
<dbReference type="InterPro" id="IPR036941">
    <property type="entry name" value="Rcpt_L-dom_sf"/>
</dbReference>
<dbReference type="PANTHER" id="PTHR31018:SF3">
    <property type="entry name" value="RECEPTOR PROTEIN-TYROSINE KINASE"/>
    <property type="match status" value="1"/>
</dbReference>
<dbReference type="PANTHER" id="PTHR31018">
    <property type="entry name" value="SPORULATION-SPECIFIC PROTEIN-RELATED"/>
    <property type="match status" value="1"/>
</dbReference>
<dbReference type="SUPFAM" id="SSF52058">
    <property type="entry name" value="L domain-like"/>
    <property type="match status" value="2"/>
</dbReference>